<gene>
    <name evidence="1" type="primary">mnmE</name>
    <name evidence="1" type="synonym">trmE</name>
    <name type="ordered locus">Bpro_4904</name>
</gene>
<feature type="chain" id="PRO_0000345870" description="tRNA modification GTPase MnmE">
    <location>
        <begin position="1"/>
        <end position="478"/>
    </location>
</feature>
<feature type="domain" description="TrmE-type G">
    <location>
        <begin position="231"/>
        <end position="400"/>
    </location>
</feature>
<feature type="binding site" evidence="1">
    <location>
        <position position="25"/>
    </location>
    <ligand>
        <name>(6S)-5-formyl-5,6,7,8-tetrahydrofolate</name>
        <dbReference type="ChEBI" id="CHEBI:57457"/>
    </ligand>
</feature>
<feature type="binding site" evidence="1">
    <location>
        <position position="82"/>
    </location>
    <ligand>
        <name>(6S)-5-formyl-5,6,7,8-tetrahydrofolate</name>
        <dbReference type="ChEBI" id="CHEBI:57457"/>
    </ligand>
</feature>
<feature type="binding site" evidence="1">
    <location>
        <position position="135"/>
    </location>
    <ligand>
        <name>(6S)-5-formyl-5,6,7,8-tetrahydrofolate</name>
        <dbReference type="ChEBI" id="CHEBI:57457"/>
    </ligand>
</feature>
<feature type="binding site" evidence="1">
    <location>
        <begin position="241"/>
        <end position="246"/>
    </location>
    <ligand>
        <name>GTP</name>
        <dbReference type="ChEBI" id="CHEBI:37565"/>
    </ligand>
</feature>
<feature type="binding site" evidence="1">
    <location>
        <position position="241"/>
    </location>
    <ligand>
        <name>K(+)</name>
        <dbReference type="ChEBI" id="CHEBI:29103"/>
    </ligand>
</feature>
<feature type="binding site" evidence="1">
    <location>
        <position position="245"/>
    </location>
    <ligand>
        <name>Mg(2+)</name>
        <dbReference type="ChEBI" id="CHEBI:18420"/>
    </ligand>
</feature>
<feature type="binding site" evidence="1">
    <location>
        <begin position="260"/>
        <end position="266"/>
    </location>
    <ligand>
        <name>GTP</name>
        <dbReference type="ChEBI" id="CHEBI:37565"/>
    </ligand>
</feature>
<feature type="binding site" evidence="1">
    <location>
        <position position="260"/>
    </location>
    <ligand>
        <name>K(+)</name>
        <dbReference type="ChEBI" id="CHEBI:29103"/>
    </ligand>
</feature>
<feature type="binding site" evidence="1">
    <location>
        <position position="262"/>
    </location>
    <ligand>
        <name>K(+)</name>
        <dbReference type="ChEBI" id="CHEBI:29103"/>
    </ligand>
</feature>
<feature type="binding site" evidence="1">
    <location>
        <position position="265"/>
    </location>
    <ligand>
        <name>K(+)</name>
        <dbReference type="ChEBI" id="CHEBI:29103"/>
    </ligand>
</feature>
<feature type="binding site" evidence="1">
    <location>
        <position position="266"/>
    </location>
    <ligand>
        <name>Mg(2+)</name>
        <dbReference type="ChEBI" id="CHEBI:18420"/>
    </ligand>
</feature>
<feature type="binding site" evidence="1">
    <location>
        <begin position="285"/>
        <end position="288"/>
    </location>
    <ligand>
        <name>GTP</name>
        <dbReference type="ChEBI" id="CHEBI:37565"/>
    </ligand>
</feature>
<feature type="binding site" evidence="1">
    <location>
        <position position="478"/>
    </location>
    <ligand>
        <name>(6S)-5-formyl-5,6,7,8-tetrahydrofolate</name>
        <dbReference type="ChEBI" id="CHEBI:57457"/>
    </ligand>
</feature>
<dbReference type="EC" id="3.6.-.-" evidence="1"/>
<dbReference type="EMBL" id="CP000316">
    <property type="protein sequence ID" value="ABE46780.1"/>
    <property type="molecule type" value="Genomic_DNA"/>
</dbReference>
<dbReference type="RefSeq" id="WP_011485765.1">
    <property type="nucleotide sequence ID" value="NC_007948.1"/>
</dbReference>
<dbReference type="SMR" id="Q121L2"/>
<dbReference type="STRING" id="296591.Bpro_4904"/>
<dbReference type="KEGG" id="pol:Bpro_4904"/>
<dbReference type="eggNOG" id="COG0486">
    <property type="taxonomic scope" value="Bacteria"/>
</dbReference>
<dbReference type="HOGENOM" id="CLU_019624_4_1_4"/>
<dbReference type="OrthoDB" id="9805918at2"/>
<dbReference type="Proteomes" id="UP000001983">
    <property type="component" value="Chromosome"/>
</dbReference>
<dbReference type="GO" id="GO:0005829">
    <property type="term" value="C:cytosol"/>
    <property type="evidence" value="ECO:0007669"/>
    <property type="project" value="TreeGrafter"/>
</dbReference>
<dbReference type="GO" id="GO:0005525">
    <property type="term" value="F:GTP binding"/>
    <property type="evidence" value="ECO:0007669"/>
    <property type="project" value="UniProtKB-UniRule"/>
</dbReference>
<dbReference type="GO" id="GO:0003924">
    <property type="term" value="F:GTPase activity"/>
    <property type="evidence" value="ECO:0007669"/>
    <property type="project" value="UniProtKB-UniRule"/>
</dbReference>
<dbReference type="GO" id="GO:0046872">
    <property type="term" value="F:metal ion binding"/>
    <property type="evidence" value="ECO:0007669"/>
    <property type="project" value="UniProtKB-KW"/>
</dbReference>
<dbReference type="GO" id="GO:0030488">
    <property type="term" value="P:tRNA methylation"/>
    <property type="evidence" value="ECO:0007669"/>
    <property type="project" value="TreeGrafter"/>
</dbReference>
<dbReference type="GO" id="GO:0002098">
    <property type="term" value="P:tRNA wobble uridine modification"/>
    <property type="evidence" value="ECO:0007669"/>
    <property type="project" value="TreeGrafter"/>
</dbReference>
<dbReference type="CDD" id="cd04164">
    <property type="entry name" value="trmE"/>
    <property type="match status" value="1"/>
</dbReference>
<dbReference type="CDD" id="cd14858">
    <property type="entry name" value="TrmE_N"/>
    <property type="match status" value="1"/>
</dbReference>
<dbReference type="Gene3D" id="3.40.50.300">
    <property type="entry name" value="P-loop containing nucleotide triphosphate hydrolases"/>
    <property type="match status" value="1"/>
</dbReference>
<dbReference type="Gene3D" id="3.30.1360.120">
    <property type="entry name" value="Probable tRNA modification gtpase trme, domain 1"/>
    <property type="match status" value="1"/>
</dbReference>
<dbReference type="Gene3D" id="1.20.120.430">
    <property type="entry name" value="tRNA modification GTPase MnmE domain 2"/>
    <property type="match status" value="1"/>
</dbReference>
<dbReference type="HAMAP" id="MF_00379">
    <property type="entry name" value="GTPase_MnmE"/>
    <property type="match status" value="1"/>
</dbReference>
<dbReference type="InterPro" id="IPR031168">
    <property type="entry name" value="G_TrmE"/>
</dbReference>
<dbReference type="InterPro" id="IPR006073">
    <property type="entry name" value="GTP-bd"/>
</dbReference>
<dbReference type="InterPro" id="IPR018948">
    <property type="entry name" value="GTP-bd_TrmE_N"/>
</dbReference>
<dbReference type="InterPro" id="IPR004520">
    <property type="entry name" value="GTPase_MnmE"/>
</dbReference>
<dbReference type="InterPro" id="IPR027368">
    <property type="entry name" value="MnmE_dom2"/>
</dbReference>
<dbReference type="InterPro" id="IPR025867">
    <property type="entry name" value="MnmE_helical"/>
</dbReference>
<dbReference type="InterPro" id="IPR027417">
    <property type="entry name" value="P-loop_NTPase"/>
</dbReference>
<dbReference type="InterPro" id="IPR005225">
    <property type="entry name" value="Small_GTP-bd"/>
</dbReference>
<dbReference type="InterPro" id="IPR027266">
    <property type="entry name" value="TrmE/GcvT_dom1"/>
</dbReference>
<dbReference type="NCBIfam" id="TIGR00450">
    <property type="entry name" value="mnmE_trmE_thdF"/>
    <property type="match status" value="1"/>
</dbReference>
<dbReference type="NCBIfam" id="NF003661">
    <property type="entry name" value="PRK05291.1-3"/>
    <property type="match status" value="1"/>
</dbReference>
<dbReference type="NCBIfam" id="TIGR00231">
    <property type="entry name" value="small_GTP"/>
    <property type="match status" value="1"/>
</dbReference>
<dbReference type="PANTHER" id="PTHR42714">
    <property type="entry name" value="TRNA MODIFICATION GTPASE GTPBP3"/>
    <property type="match status" value="1"/>
</dbReference>
<dbReference type="PANTHER" id="PTHR42714:SF2">
    <property type="entry name" value="TRNA MODIFICATION GTPASE GTPBP3, MITOCHONDRIAL"/>
    <property type="match status" value="1"/>
</dbReference>
<dbReference type="Pfam" id="PF01926">
    <property type="entry name" value="MMR_HSR1"/>
    <property type="match status" value="1"/>
</dbReference>
<dbReference type="Pfam" id="PF12631">
    <property type="entry name" value="MnmE_helical"/>
    <property type="match status" value="1"/>
</dbReference>
<dbReference type="Pfam" id="PF10396">
    <property type="entry name" value="TrmE_N"/>
    <property type="match status" value="1"/>
</dbReference>
<dbReference type="SUPFAM" id="SSF52540">
    <property type="entry name" value="P-loop containing nucleoside triphosphate hydrolases"/>
    <property type="match status" value="1"/>
</dbReference>
<dbReference type="SUPFAM" id="SSF116878">
    <property type="entry name" value="TrmE connector domain"/>
    <property type="match status" value="1"/>
</dbReference>
<dbReference type="PROSITE" id="PS51709">
    <property type="entry name" value="G_TRME"/>
    <property type="match status" value="1"/>
</dbReference>
<evidence type="ECO:0000255" key="1">
    <source>
        <dbReference type="HAMAP-Rule" id="MF_00379"/>
    </source>
</evidence>
<accession>Q121L2</accession>
<proteinExistence type="inferred from homology"/>
<keyword id="KW-0963">Cytoplasm</keyword>
<keyword id="KW-0342">GTP-binding</keyword>
<keyword id="KW-0378">Hydrolase</keyword>
<keyword id="KW-0460">Magnesium</keyword>
<keyword id="KW-0479">Metal-binding</keyword>
<keyword id="KW-0547">Nucleotide-binding</keyword>
<keyword id="KW-0630">Potassium</keyword>
<keyword id="KW-1185">Reference proteome</keyword>
<keyword id="KW-0819">tRNA processing</keyword>
<sequence>MLARHHDPIVAIATAPGRGAVGIVRVSGKDIAPVIAAICGRALAPRQATYLPFRDAQGQVIDQGLAIHFPAPHSYTGEDVLELQAHGGPVVLQLLLARCLEAGAALNPAIGQPWLAQLRVAQPGEFTERAFLNDKIDLAQAEAIADLIDASTETAARSAARSMSGEFSLAVNTLLEQLIHLRMLVEATLDFPEEDIDFLQKADAQGQLSRLQATLTGVMQRATQGAILREGIKVVIAGQPNAGKSSLLNALAGAELAIVTPIAGTTRDKVSELIQIEGVPLHVVDTAGLREALDEVEKIGVERAWAEIESADAVLFLHDLSRRDAALPAQDTINYIAADDRIARTLANKLPENTAIIDVWNKSDLTSPAGLQQVQGGVLISAKTGAGLQTLRQRLLQVVGWQAAPEGVFMARERHVRALHHVQDQLATAGRQLQAARPALDLLAEDLRQAQRQLSEITGEFTPDDLLGEIFSRFCIGK</sequence>
<organism>
    <name type="scientific">Polaromonas sp. (strain JS666 / ATCC BAA-500)</name>
    <dbReference type="NCBI Taxonomy" id="296591"/>
    <lineage>
        <taxon>Bacteria</taxon>
        <taxon>Pseudomonadati</taxon>
        <taxon>Pseudomonadota</taxon>
        <taxon>Betaproteobacteria</taxon>
        <taxon>Burkholderiales</taxon>
        <taxon>Comamonadaceae</taxon>
        <taxon>Polaromonas</taxon>
    </lineage>
</organism>
<name>MNME_POLSJ</name>
<protein>
    <recommendedName>
        <fullName evidence="1">tRNA modification GTPase MnmE</fullName>
        <ecNumber evidence="1">3.6.-.-</ecNumber>
    </recommendedName>
</protein>
<reference key="1">
    <citation type="journal article" date="2008" name="Appl. Environ. Microbiol.">
        <title>The genome of Polaromonas sp. strain JS666: insights into the evolution of a hydrocarbon- and xenobiotic-degrading bacterium, and features of relevance to biotechnology.</title>
        <authorList>
            <person name="Mattes T.E."/>
            <person name="Alexander A.K."/>
            <person name="Richardson P.M."/>
            <person name="Munk A.C."/>
            <person name="Han C.S."/>
            <person name="Stothard P."/>
            <person name="Coleman N.V."/>
        </authorList>
    </citation>
    <scope>NUCLEOTIDE SEQUENCE [LARGE SCALE GENOMIC DNA]</scope>
    <source>
        <strain>JS666 / ATCC BAA-500</strain>
    </source>
</reference>
<comment type="function">
    <text evidence="1">Exhibits a very high intrinsic GTPase hydrolysis rate. Involved in the addition of a carboxymethylaminomethyl (cmnm) group at the wobble position (U34) of certain tRNAs, forming tRNA-cmnm(5)s(2)U34.</text>
</comment>
<comment type="cofactor">
    <cofactor evidence="1">
        <name>K(+)</name>
        <dbReference type="ChEBI" id="CHEBI:29103"/>
    </cofactor>
    <text evidence="1">Binds 1 potassium ion per subunit.</text>
</comment>
<comment type="subunit">
    <text evidence="1">Homodimer. Heterotetramer of two MnmE and two MnmG subunits.</text>
</comment>
<comment type="subcellular location">
    <subcellularLocation>
        <location evidence="1">Cytoplasm</location>
    </subcellularLocation>
</comment>
<comment type="similarity">
    <text evidence="1">Belongs to the TRAFAC class TrmE-Era-EngA-EngB-Septin-like GTPase superfamily. TrmE GTPase family.</text>
</comment>